<organism>
    <name type="scientific">Salmonella enteritidis PT4 (strain P125109)</name>
    <dbReference type="NCBI Taxonomy" id="550537"/>
    <lineage>
        <taxon>Bacteria</taxon>
        <taxon>Pseudomonadati</taxon>
        <taxon>Pseudomonadota</taxon>
        <taxon>Gammaproteobacteria</taxon>
        <taxon>Enterobacterales</taxon>
        <taxon>Enterobacteriaceae</taxon>
        <taxon>Salmonella</taxon>
    </lineage>
</organism>
<protein>
    <recommendedName>
        <fullName evidence="1">Rhomboid protease GlpG</fullName>
        <ecNumber evidence="1">3.4.21.105</ecNumber>
    </recommendedName>
    <alternativeName>
        <fullName evidence="1">Intramembrane serine protease</fullName>
    </alternativeName>
</protein>
<keyword id="KW-0997">Cell inner membrane</keyword>
<keyword id="KW-1003">Cell membrane</keyword>
<keyword id="KW-0378">Hydrolase</keyword>
<keyword id="KW-0472">Membrane</keyword>
<keyword id="KW-0645">Protease</keyword>
<keyword id="KW-0720">Serine protease</keyword>
<keyword id="KW-0812">Transmembrane</keyword>
<keyword id="KW-1133">Transmembrane helix</keyword>
<sequence>MLMITSFANPRVAQAFVDYMATQGVILTIQQHNQSDIWLADESQAERVRGELARFIENPGDPRYLAASWQSGQTNSGLRYRRFPFLATLRERAGPVTWIVMLACVLVYIAMSLIGDQTVMVWLAWPFDPVLKFEVWRYFTHIFMHFSLMHILFNLLWWWYLGGAVEKRLGSGKLIVITVISALLSGYVQQKFSGPWFGGLSGVVYALMGYVWLRGERDPQSGIYLQRGLIIFALLWIVAGWFDWFGMSMANGAHIAGLIVGLAMAFVDTLNARKRT</sequence>
<proteinExistence type="inferred from homology"/>
<reference key="1">
    <citation type="journal article" date="2008" name="Genome Res.">
        <title>Comparative genome analysis of Salmonella enteritidis PT4 and Salmonella gallinarum 287/91 provides insights into evolutionary and host adaptation pathways.</title>
        <authorList>
            <person name="Thomson N.R."/>
            <person name="Clayton D.J."/>
            <person name="Windhorst D."/>
            <person name="Vernikos G."/>
            <person name="Davidson S."/>
            <person name="Churcher C."/>
            <person name="Quail M.A."/>
            <person name="Stevens M."/>
            <person name="Jones M.A."/>
            <person name="Watson M."/>
            <person name="Barron A."/>
            <person name="Layton A."/>
            <person name="Pickard D."/>
            <person name="Kingsley R.A."/>
            <person name="Bignell A."/>
            <person name="Clark L."/>
            <person name="Harris B."/>
            <person name="Ormond D."/>
            <person name="Abdellah Z."/>
            <person name="Brooks K."/>
            <person name="Cherevach I."/>
            <person name="Chillingworth T."/>
            <person name="Woodward J."/>
            <person name="Norberczak H."/>
            <person name="Lord A."/>
            <person name="Arrowsmith C."/>
            <person name="Jagels K."/>
            <person name="Moule S."/>
            <person name="Mungall K."/>
            <person name="Saunders M."/>
            <person name="Whitehead S."/>
            <person name="Chabalgoity J.A."/>
            <person name="Maskell D."/>
            <person name="Humphreys T."/>
            <person name="Roberts M."/>
            <person name="Barrow P.A."/>
            <person name="Dougan G."/>
            <person name="Parkhill J."/>
        </authorList>
    </citation>
    <scope>NUCLEOTIDE SEQUENCE [LARGE SCALE GENOMIC DNA]</scope>
    <source>
        <strain>P125109</strain>
    </source>
</reference>
<evidence type="ECO:0000255" key="1">
    <source>
        <dbReference type="HAMAP-Rule" id="MF_01594"/>
    </source>
</evidence>
<name>GLPG_SALEP</name>
<feature type="chain" id="PRO_1000147863" description="Rhomboid protease GlpG">
    <location>
        <begin position="1"/>
        <end position="276"/>
    </location>
</feature>
<feature type="transmembrane region" description="Helical" evidence="1">
    <location>
        <begin position="94"/>
        <end position="114"/>
    </location>
</feature>
<feature type="transmembrane region" description="Helical" evidence="1">
    <location>
        <begin position="142"/>
        <end position="162"/>
    </location>
</feature>
<feature type="transmembrane region" description="Helical" evidence="1">
    <location>
        <begin position="169"/>
        <end position="189"/>
    </location>
</feature>
<feature type="transmembrane region" description="Helical" evidence="1">
    <location>
        <begin position="192"/>
        <end position="212"/>
    </location>
</feature>
<feature type="transmembrane region" description="Helical" evidence="1">
    <location>
        <begin position="229"/>
        <end position="249"/>
    </location>
</feature>
<feature type="transmembrane region" description="Helical" evidence="1">
    <location>
        <begin position="250"/>
        <end position="270"/>
    </location>
</feature>
<feature type="active site" description="Nucleophile" evidence="1">
    <location>
        <position position="201"/>
    </location>
</feature>
<feature type="active site" evidence="1">
    <location>
        <position position="254"/>
    </location>
</feature>
<gene>
    <name evidence="1" type="primary">glpG</name>
    <name type="ordered locus">SEN3349</name>
</gene>
<comment type="function">
    <text evidence="1">Rhomboid-type serine protease that catalyzes intramembrane proteolysis.</text>
</comment>
<comment type="catalytic activity">
    <reaction evidence="1">
        <text>Cleaves type-1 transmembrane domains using a catalytic dyad composed of serine and histidine that are contributed by different transmembrane domains.</text>
        <dbReference type="EC" id="3.4.21.105"/>
    </reaction>
</comment>
<comment type="subcellular location">
    <subcellularLocation>
        <location evidence="1">Cell inner membrane</location>
        <topology evidence="1">Multi-pass membrane protein</topology>
    </subcellularLocation>
</comment>
<comment type="similarity">
    <text evidence="1">Belongs to the peptidase S54 family.</text>
</comment>
<dbReference type="EC" id="3.4.21.105" evidence="1"/>
<dbReference type="EMBL" id="AM933172">
    <property type="protein sequence ID" value="CAR34924.1"/>
    <property type="molecule type" value="Genomic_DNA"/>
</dbReference>
<dbReference type="RefSeq" id="WP_000928699.1">
    <property type="nucleotide sequence ID" value="NC_011294.1"/>
</dbReference>
<dbReference type="SMR" id="B5R383"/>
<dbReference type="KEGG" id="set:SEN3349"/>
<dbReference type="HOGENOM" id="CLU_058989_0_0_6"/>
<dbReference type="Proteomes" id="UP000000613">
    <property type="component" value="Chromosome"/>
</dbReference>
<dbReference type="GO" id="GO:0005886">
    <property type="term" value="C:plasma membrane"/>
    <property type="evidence" value="ECO:0007669"/>
    <property type="project" value="UniProtKB-SubCell"/>
</dbReference>
<dbReference type="GO" id="GO:0004252">
    <property type="term" value="F:serine-type endopeptidase activity"/>
    <property type="evidence" value="ECO:0007669"/>
    <property type="project" value="UniProtKB-UniRule"/>
</dbReference>
<dbReference type="GO" id="GO:0006508">
    <property type="term" value="P:proteolysis"/>
    <property type="evidence" value="ECO:0007669"/>
    <property type="project" value="UniProtKB-UniRule"/>
</dbReference>
<dbReference type="FunFam" id="1.20.1540.10:FF:000003">
    <property type="entry name" value="Rhomboid protease GlpG"/>
    <property type="match status" value="1"/>
</dbReference>
<dbReference type="FunFam" id="3.30.70.2350:FF:000001">
    <property type="entry name" value="Rhomboid protease GlpG"/>
    <property type="match status" value="1"/>
</dbReference>
<dbReference type="Gene3D" id="3.30.70.2350">
    <property type="match status" value="1"/>
</dbReference>
<dbReference type="Gene3D" id="1.20.1540.10">
    <property type="entry name" value="Rhomboid-like"/>
    <property type="match status" value="1"/>
</dbReference>
<dbReference type="HAMAP" id="MF_01594">
    <property type="entry name" value="Rhomboid_GlpG"/>
    <property type="match status" value="1"/>
</dbReference>
<dbReference type="InterPro" id="IPR038236">
    <property type="entry name" value="GlpG_N_sf"/>
</dbReference>
<dbReference type="InterPro" id="IPR022732">
    <property type="entry name" value="Peptidase_S54_GlpG_N"/>
</dbReference>
<dbReference type="InterPro" id="IPR022764">
    <property type="entry name" value="Peptidase_S54_rhomboid_dom"/>
</dbReference>
<dbReference type="InterPro" id="IPR035952">
    <property type="entry name" value="Rhomboid-like_sf"/>
</dbReference>
<dbReference type="InterPro" id="IPR023662">
    <property type="entry name" value="Rhomboid_protease_GlpG"/>
</dbReference>
<dbReference type="NCBIfam" id="NF008155">
    <property type="entry name" value="PRK10907.1"/>
    <property type="match status" value="1"/>
</dbReference>
<dbReference type="NCBIfam" id="TIGR04239">
    <property type="entry name" value="rhombo_GlpG"/>
    <property type="match status" value="1"/>
</dbReference>
<dbReference type="PANTHER" id="PTHR43066:SF26">
    <property type="entry name" value="RHOMBOID PROTEASE GLPG"/>
    <property type="match status" value="1"/>
</dbReference>
<dbReference type="PANTHER" id="PTHR43066">
    <property type="entry name" value="RHOMBOID-RELATED PROTEIN"/>
    <property type="match status" value="1"/>
</dbReference>
<dbReference type="Pfam" id="PF01694">
    <property type="entry name" value="Rhomboid"/>
    <property type="match status" value="1"/>
</dbReference>
<dbReference type="Pfam" id="PF12122">
    <property type="entry name" value="Rhomboid_N"/>
    <property type="match status" value="1"/>
</dbReference>
<dbReference type="SUPFAM" id="SSF144091">
    <property type="entry name" value="Rhomboid-like"/>
    <property type="match status" value="1"/>
</dbReference>
<accession>B5R383</accession>